<keyword id="KW-0997">Cell inner membrane</keyword>
<keyword id="KW-1003">Cell membrane</keyword>
<keyword id="KW-0472">Membrane</keyword>
<keyword id="KW-1185">Reference proteome</keyword>
<keyword id="KW-0812">Transmembrane</keyword>
<keyword id="KW-1133">Transmembrane helix</keyword>
<feature type="chain" id="PRO_0000169330" description="UPF0382 inner membrane protein YgdD">
    <location>
        <begin position="1"/>
        <end position="131"/>
    </location>
</feature>
<feature type="topological domain" description="Periplasmic" evidence="2">
    <location>
        <begin position="1"/>
        <end position="4"/>
    </location>
</feature>
<feature type="transmembrane region" description="Helical" evidence="2">
    <location>
        <begin position="5"/>
        <end position="25"/>
    </location>
</feature>
<feature type="topological domain" description="Cytoplasmic" evidence="2">
    <location>
        <begin position="26"/>
        <end position="64"/>
    </location>
</feature>
<feature type="transmembrane region" description="Helical" evidence="2">
    <location>
        <begin position="65"/>
        <end position="85"/>
    </location>
</feature>
<feature type="topological domain" description="Periplasmic" evidence="2">
    <location>
        <begin position="86"/>
        <end position="97"/>
    </location>
</feature>
<feature type="transmembrane region" description="Helical" evidence="2">
    <location>
        <begin position="98"/>
        <end position="118"/>
    </location>
</feature>
<feature type="topological domain" description="Cytoplasmic" evidence="2">
    <location>
        <begin position="119"/>
        <end position="131"/>
    </location>
</feature>
<name>YGDD_ECO57</name>
<dbReference type="EMBL" id="AE005174">
    <property type="protein sequence ID" value="AAG57921.1"/>
    <property type="molecule type" value="Genomic_DNA"/>
</dbReference>
<dbReference type="EMBL" id="BA000007">
    <property type="protein sequence ID" value="BAB37090.1"/>
    <property type="molecule type" value="Genomic_DNA"/>
</dbReference>
<dbReference type="PIR" id="C91087">
    <property type="entry name" value="C91087"/>
</dbReference>
<dbReference type="PIR" id="E85932">
    <property type="entry name" value="E85932"/>
</dbReference>
<dbReference type="RefSeq" id="NP_311694.1">
    <property type="nucleotide sequence ID" value="NC_002695.1"/>
</dbReference>
<dbReference type="RefSeq" id="WP_000203905.1">
    <property type="nucleotide sequence ID" value="NZ_VOAI01000003.1"/>
</dbReference>
<dbReference type="STRING" id="155864.Z4124"/>
<dbReference type="GeneID" id="916523"/>
<dbReference type="KEGG" id="ece:Z4124"/>
<dbReference type="KEGG" id="ecs:ECs_3667"/>
<dbReference type="PATRIC" id="fig|386585.9.peg.3833"/>
<dbReference type="eggNOG" id="COG2363">
    <property type="taxonomic scope" value="Bacteria"/>
</dbReference>
<dbReference type="HOGENOM" id="CLU_096548_3_2_6"/>
<dbReference type="OMA" id="VEYQFYH"/>
<dbReference type="Proteomes" id="UP000000558">
    <property type="component" value="Chromosome"/>
</dbReference>
<dbReference type="Proteomes" id="UP000002519">
    <property type="component" value="Chromosome"/>
</dbReference>
<dbReference type="GO" id="GO:0005886">
    <property type="term" value="C:plasma membrane"/>
    <property type="evidence" value="ECO:0007669"/>
    <property type="project" value="UniProtKB-SubCell"/>
</dbReference>
<dbReference type="InterPro" id="IPR006696">
    <property type="entry name" value="DUF423"/>
</dbReference>
<dbReference type="NCBIfam" id="NF008125">
    <property type="entry name" value="PRK10873.1"/>
    <property type="match status" value="1"/>
</dbReference>
<dbReference type="PANTHER" id="PTHR43461">
    <property type="entry name" value="TRANSMEMBRANE PROTEIN 256"/>
    <property type="match status" value="1"/>
</dbReference>
<dbReference type="PANTHER" id="PTHR43461:SF1">
    <property type="entry name" value="TRANSMEMBRANE PROTEIN 256"/>
    <property type="match status" value="1"/>
</dbReference>
<dbReference type="Pfam" id="PF04241">
    <property type="entry name" value="DUF423"/>
    <property type="match status" value="1"/>
</dbReference>
<gene>
    <name type="primary">ygdD</name>
    <name type="ordered locus">Z4124</name>
    <name type="ordered locus">ECs3667</name>
</gene>
<comment type="subcellular location">
    <subcellularLocation>
        <location evidence="1">Cell inner membrane</location>
        <topology evidence="1">Multi-pass membrane protein</topology>
    </subcellularLocation>
</comment>
<comment type="similarity">
    <text evidence="3">Belongs to the UPF0382 family.</text>
</comment>
<proteinExistence type="inferred from homology"/>
<reference key="1">
    <citation type="journal article" date="2001" name="Nature">
        <title>Genome sequence of enterohaemorrhagic Escherichia coli O157:H7.</title>
        <authorList>
            <person name="Perna N.T."/>
            <person name="Plunkett G. III"/>
            <person name="Burland V."/>
            <person name="Mau B."/>
            <person name="Glasner J.D."/>
            <person name="Rose D.J."/>
            <person name="Mayhew G.F."/>
            <person name="Evans P.S."/>
            <person name="Gregor J."/>
            <person name="Kirkpatrick H.A."/>
            <person name="Posfai G."/>
            <person name="Hackett J."/>
            <person name="Klink S."/>
            <person name="Boutin A."/>
            <person name="Shao Y."/>
            <person name="Miller L."/>
            <person name="Grotbeck E.J."/>
            <person name="Davis N.W."/>
            <person name="Lim A."/>
            <person name="Dimalanta E.T."/>
            <person name="Potamousis K."/>
            <person name="Apodaca J."/>
            <person name="Anantharaman T.S."/>
            <person name="Lin J."/>
            <person name="Yen G."/>
            <person name="Schwartz D.C."/>
            <person name="Welch R.A."/>
            <person name="Blattner F.R."/>
        </authorList>
    </citation>
    <scope>NUCLEOTIDE SEQUENCE [LARGE SCALE GENOMIC DNA]</scope>
    <source>
        <strain>O157:H7 / EDL933 / ATCC 700927 / EHEC</strain>
    </source>
</reference>
<reference key="2">
    <citation type="journal article" date="2001" name="DNA Res.">
        <title>Complete genome sequence of enterohemorrhagic Escherichia coli O157:H7 and genomic comparison with a laboratory strain K-12.</title>
        <authorList>
            <person name="Hayashi T."/>
            <person name="Makino K."/>
            <person name="Ohnishi M."/>
            <person name="Kurokawa K."/>
            <person name="Ishii K."/>
            <person name="Yokoyama K."/>
            <person name="Han C.-G."/>
            <person name="Ohtsubo E."/>
            <person name="Nakayama K."/>
            <person name="Murata T."/>
            <person name="Tanaka M."/>
            <person name="Tobe T."/>
            <person name="Iida T."/>
            <person name="Takami H."/>
            <person name="Honda T."/>
            <person name="Sasakawa C."/>
            <person name="Ogasawara N."/>
            <person name="Yasunaga T."/>
            <person name="Kuhara S."/>
            <person name="Shiba T."/>
            <person name="Hattori M."/>
            <person name="Shinagawa H."/>
        </authorList>
    </citation>
    <scope>NUCLEOTIDE SEQUENCE [LARGE SCALE GENOMIC DNA]</scope>
    <source>
        <strain>O157:H7 / Sakai / RIMD 0509952 / EHEC</strain>
    </source>
</reference>
<accession>P0ADR4</accession>
<accession>P32065</accession>
<accession>Q46667</accession>
<organism>
    <name type="scientific">Escherichia coli O157:H7</name>
    <dbReference type="NCBI Taxonomy" id="83334"/>
    <lineage>
        <taxon>Bacteria</taxon>
        <taxon>Pseudomonadati</taxon>
        <taxon>Pseudomonadota</taxon>
        <taxon>Gammaproteobacteria</taxon>
        <taxon>Enterobacterales</taxon>
        <taxon>Enterobacteriaceae</taxon>
        <taxon>Escherichia</taxon>
    </lineage>
</organism>
<protein>
    <recommendedName>
        <fullName>UPF0382 inner membrane protein YgdD</fullName>
    </recommendedName>
</protein>
<evidence type="ECO:0000250" key="1"/>
<evidence type="ECO:0000255" key="2"/>
<evidence type="ECO:0000305" key="3"/>
<sequence length="131" mass="14333">MTSRFMLIFAAISGFIFVALGAFGAHVLSKTMGAVEMGWIQTGLEYQAFHTLAILGLAVAMQRRISIWFYWSSVFLALGTVLFSGSLYCLALSHLRLWAFVTPVGGVSFLAGWALMLVGAIRLKRKGVSHE</sequence>